<sequence>MAFFAGISDWVAQRLQRNSETARLDLERAYEAALYITALETEYASGRSLRRLPSQLSARQQTSLQAELRQTLRSLRHYRQRYRRHQPVQLQAGLALGRPGMGMPTIAHEKLQLIEQVLARYGQPTVHSSNPDDSQLMTSKNNSKPVPDPESDDEYLISQTSFLPRSIFGAFADLRQQLDPKAEDQIVQNFRSRKGKTLIALRFVLLLVLVPLLTQQISKSFIVGPIVDRLRSQDPEAIFLNFQMEEEAFVKLNQYQQLLRFQHYLKEAPPLTEAEIDERVREKAEEIAVEYRQESSNAIKNIFADLISAAAFAILLISSQEEIQLLKSFIDEVVYGISDSAKAFIIILFTDIFVGFHSPHGWEVILESISRHFGIPENRSFIFLFIATFPVILDTIFKYWIFRYLNRISPSAVATYRNMNE</sequence>
<keyword id="KW-0997">Cell inner membrane</keyword>
<keyword id="KW-1003">Cell membrane</keyword>
<keyword id="KW-0375">Hydrogen ion transport</keyword>
<keyword id="KW-0406">Ion transport</keyword>
<keyword id="KW-0472">Membrane</keyword>
<keyword id="KW-0812">Transmembrane</keyword>
<keyword id="KW-1133">Transmembrane helix</keyword>
<keyword id="KW-0813">Transport</keyword>
<organism>
    <name type="scientific">Synechococcus sp. (strain ATCC 27144 / PCC 6301 / SAUG 1402/1)</name>
    <name type="common">Anacystis nidulans</name>
    <dbReference type="NCBI Taxonomy" id="269084"/>
    <lineage>
        <taxon>Bacteria</taxon>
        <taxon>Bacillati</taxon>
        <taxon>Cyanobacteriota</taxon>
        <taxon>Cyanophyceae</taxon>
        <taxon>Synechococcales</taxon>
        <taxon>Synechococcaceae</taxon>
        <taxon>Synechococcus</taxon>
    </lineage>
</organism>
<name>PXCA_SYNP6</name>
<proteinExistence type="inferred from homology"/>
<reference key="1">
    <citation type="journal article" date="2007" name="Photosyn. Res.">
        <title>Complete nucleotide sequence of the freshwater unicellular cyanobacterium Synechococcus elongatus PCC 6301 chromosome: gene content and organization.</title>
        <authorList>
            <person name="Sugita C."/>
            <person name="Ogata K."/>
            <person name="Shikata M."/>
            <person name="Jikuya H."/>
            <person name="Takano J."/>
            <person name="Furumichi M."/>
            <person name="Kanehisa M."/>
            <person name="Omata T."/>
            <person name="Sugiura M."/>
            <person name="Sugita M."/>
        </authorList>
    </citation>
    <scope>NUCLEOTIDE SEQUENCE [LARGE SCALE GENOMIC DNA]</scope>
    <source>
        <strain>ATCC 27144 / PCC 6301 / SAUG 1402/1</strain>
    </source>
</reference>
<feature type="chain" id="PRO_0000293498" description="Proton extrusion protein PxcA">
    <location>
        <begin position="1"/>
        <end position="421"/>
    </location>
</feature>
<feature type="transmembrane region" description="Helical" evidence="1">
    <location>
        <begin position="203"/>
        <end position="223"/>
    </location>
</feature>
<feature type="transmembrane region" description="Helical" evidence="1">
    <location>
        <begin position="298"/>
        <end position="318"/>
    </location>
</feature>
<feature type="transmembrane region" description="Helical" evidence="1">
    <location>
        <begin position="345"/>
        <end position="365"/>
    </location>
</feature>
<feature type="transmembrane region" description="Helical" evidence="1">
    <location>
        <begin position="381"/>
        <end position="401"/>
    </location>
</feature>
<feature type="region of interest" description="Disordered" evidence="2">
    <location>
        <begin position="124"/>
        <end position="153"/>
    </location>
</feature>
<feature type="compositionally biased region" description="Polar residues" evidence="2">
    <location>
        <begin position="125"/>
        <end position="144"/>
    </location>
</feature>
<evidence type="ECO:0000255" key="1">
    <source>
        <dbReference type="HAMAP-Rule" id="MF_01308"/>
    </source>
</evidence>
<evidence type="ECO:0000256" key="2">
    <source>
        <dbReference type="SAM" id="MobiDB-lite"/>
    </source>
</evidence>
<accession>Q5N4M6</accession>
<gene>
    <name evidence="1" type="primary">pxcA</name>
    <name type="ordered locus">syc0553_d</name>
</gene>
<dbReference type="EMBL" id="AP008231">
    <property type="protein sequence ID" value="BAD78743.1"/>
    <property type="molecule type" value="Genomic_DNA"/>
</dbReference>
<dbReference type="RefSeq" id="WP_011242865.1">
    <property type="nucleotide sequence ID" value="NZ_CP085785.1"/>
</dbReference>
<dbReference type="SMR" id="Q5N4M6"/>
<dbReference type="GeneID" id="72429844"/>
<dbReference type="KEGG" id="syc:syc0553_d"/>
<dbReference type="eggNOG" id="ENOG502Z8DN">
    <property type="taxonomic scope" value="Bacteria"/>
</dbReference>
<dbReference type="Proteomes" id="UP000001175">
    <property type="component" value="Chromosome"/>
</dbReference>
<dbReference type="GO" id="GO:0005886">
    <property type="term" value="C:plasma membrane"/>
    <property type="evidence" value="ECO:0007669"/>
    <property type="project" value="UniProtKB-SubCell"/>
</dbReference>
<dbReference type="GO" id="GO:0015078">
    <property type="term" value="F:proton transmembrane transporter activity"/>
    <property type="evidence" value="ECO:0007669"/>
    <property type="project" value="UniProtKB-UniRule"/>
</dbReference>
<dbReference type="HAMAP" id="MF_01308">
    <property type="entry name" value="CemA_PxcA"/>
    <property type="match status" value="1"/>
</dbReference>
<dbReference type="InterPro" id="IPR004282">
    <property type="entry name" value="CemA"/>
</dbReference>
<dbReference type="NCBIfam" id="NF002706">
    <property type="entry name" value="PRK02507.1-5"/>
    <property type="match status" value="1"/>
</dbReference>
<dbReference type="PANTHER" id="PTHR33650:SF2">
    <property type="entry name" value="CHLOROPLAST ENVELOPE MEMBRANE PROTEIN"/>
    <property type="match status" value="1"/>
</dbReference>
<dbReference type="PANTHER" id="PTHR33650">
    <property type="entry name" value="CHLOROPLAST ENVELOPE MEMBRANE PROTEIN-RELATED"/>
    <property type="match status" value="1"/>
</dbReference>
<dbReference type="Pfam" id="PF03040">
    <property type="entry name" value="CemA"/>
    <property type="match status" value="1"/>
</dbReference>
<comment type="function">
    <text evidence="1">Required for H(+) efflux immediately after light irradiation to form a rapid H(+) concentration gradient across the thylakoid membranes. Together with PxcL, contributes to transient H(+) uptake following dark to light transition.</text>
</comment>
<comment type="subcellular location">
    <subcellularLocation>
        <location evidence="1">Cell inner membrane</location>
        <topology evidence="1">Multi-pass membrane protein</topology>
    </subcellularLocation>
</comment>
<comment type="similarity">
    <text evidence="1">Belongs to the CemA family.</text>
</comment>
<protein>
    <recommendedName>
        <fullName evidence="1">Proton extrusion protein PxcA</fullName>
    </recommendedName>
</protein>